<dbReference type="EC" id="6.1.1.2" evidence="1"/>
<dbReference type="EMBL" id="AE017126">
    <property type="protein sequence ID" value="AAQ00108.1"/>
    <property type="molecule type" value="Genomic_DNA"/>
</dbReference>
<dbReference type="RefSeq" id="NP_875455.1">
    <property type="nucleotide sequence ID" value="NC_005042.1"/>
</dbReference>
<dbReference type="RefSeq" id="WP_011125215.1">
    <property type="nucleotide sequence ID" value="NC_005042.1"/>
</dbReference>
<dbReference type="SMR" id="Q7VBM9"/>
<dbReference type="STRING" id="167539.Pro_1063"/>
<dbReference type="EnsemblBacteria" id="AAQ00108">
    <property type="protein sequence ID" value="AAQ00108"/>
    <property type="gene ID" value="Pro_1063"/>
</dbReference>
<dbReference type="KEGG" id="pma:Pro_1063"/>
<dbReference type="PATRIC" id="fig|167539.5.peg.1113"/>
<dbReference type="eggNOG" id="COG0180">
    <property type="taxonomic scope" value="Bacteria"/>
</dbReference>
<dbReference type="HOGENOM" id="CLU_029244_1_4_3"/>
<dbReference type="OrthoDB" id="9801042at2"/>
<dbReference type="Proteomes" id="UP000001420">
    <property type="component" value="Chromosome"/>
</dbReference>
<dbReference type="GO" id="GO:0005737">
    <property type="term" value="C:cytoplasm"/>
    <property type="evidence" value="ECO:0007669"/>
    <property type="project" value="UniProtKB-SubCell"/>
</dbReference>
<dbReference type="GO" id="GO:0005524">
    <property type="term" value="F:ATP binding"/>
    <property type="evidence" value="ECO:0007669"/>
    <property type="project" value="UniProtKB-UniRule"/>
</dbReference>
<dbReference type="GO" id="GO:0004830">
    <property type="term" value="F:tryptophan-tRNA ligase activity"/>
    <property type="evidence" value="ECO:0007669"/>
    <property type="project" value="UniProtKB-UniRule"/>
</dbReference>
<dbReference type="GO" id="GO:0006436">
    <property type="term" value="P:tryptophanyl-tRNA aminoacylation"/>
    <property type="evidence" value="ECO:0007669"/>
    <property type="project" value="UniProtKB-UniRule"/>
</dbReference>
<dbReference type="CDD" id="cd00806">
    <property type="entry name" value="TrpRS_core"/>
    <property type="match status" value="1"/>
</dbReference>
<dbReference type="FunFam" id="1.10.240.10:FF:000002">
    <property type="entry name" value="Tryptophan--tRNA ligase"/>
    <property type="match status" value="1"/>
</dbReference>
<dbReference type="Gene3D" id="3.40.50.620">
    <property type="entry name" value="HUPs"/>
    <property type="match status" value="1"/>
</dbReference>
<dbReference type="Gene3D" id="1.10.240.10">
    <property type="entry name" value="Tyrosyl-Transfer RNA Synthetase"/>
    <property type="match status" value="1"/>
</dbReference>
<dbReference type="HAMAP" id="MF_00140_B">
    <property type="entry name" value="Trp_tRNA_synth_B"/>
    <property type="match status" value="1"/>
</dbReference>
<dbReference type="InterPro" id="IPR002305">
    <property type="entry name" value="aa-tRNA-synth_Ic"/>
</dbReference>
<dbReference type="InterPro" id="IPR014729">
    <property type="entry name" value="Rossmann-like_a/b/a_fold"/>
</dbReference>
<dbReference type="InterPro" id="IPR002306">
    <property type="entry name" value="Trp-tRNA-ligase"/>
</dbReference>
<dbReference type="InterPro" id="IPR024109">
    <property type="entry name" value="Trp-tRNA-ligase_bac-type"/>
</dbReference>
<dbReference type="InterPro" id="IPR050203">
    <property type="entry name" value="Trp-tRNA_synthetase"/>
</dbReference>
<dbReference type="NCBIfam" id="TIGR00233">
    <property type="entry name" value="trpS"/>
    <property type="match status" value="1"/>
</dbReference>
<dbReference type="PANTHER" id="PTHR43766">
    <property type="entry name" value="TRYPTOPHAN--TRNA LIGASE, MITOCHONDRIAL"/>
    <property type="match status" value="1"/>
</dbReference>
<dbReference type="PANTHER" id="PTHR43766:SF1">
    <property type="entry name" value="TRYPTOPHAN--TRNA LIGASE, MITOCHONDRIAL"/>
    <property type="match status" value="1"/>
</dbReference>
<dbReference type="Pfam" id="PF00579">
    <property type="entry name" value="tRNA-synt_1b"/>
    <property type="match status" value="1"/>
</dbReference>
<dbReference type="PRINTS" id="PR01039">
    <property type="entry name" value="TRNASYNTHTRP"/>
</dbReference>
<dbReference type="SUPFAM" id="SSF52374">
    <property type="entry name" value="Nucleotidylyl transferase"/>
    <property type="match status" value="1"/>
</dbReference>
<protein>
    <recommendedName>
        <fullName evidence="1">Tryptophan--tRNA ligase</fullName>
        <ecNumber evidence="1">6.1.1.2</ecNumber>
    </recommendedName>
    <alternativeName>
        <fullName evidence="1">Tryptophanyl-tRNA synthetase</fullName>
        <shortName evidence="1">TrpRS</shortName>
    </alternativeName>
</protein>
<organism>
    <name type="scientific">Prochlorococcus marinus (strain SARG / CCMP1375 / SS120)</name>
    <dbReference type="NCBI Taxonomy" id="167539"/>
    <lineage>
        <taxon>Bacteria</taxon>
        <taxon>Bacillati</taxon>
        <taxon>Cyanobacteriota</taxon>
        <taxon>Cyanophyceae</taxon>
        <taxon>Synechococcales</taxon>
        <taxon>Prochlorococcaceae</taxon>
        <taxon>Prochlorococcus</taxon>
    </lineage>
</organism>
<sequence>MTKKRVLSGVQPTGAIHIGNWLGAIRNWVSLQNEYDTYVCVVDLHAITVPHDPQQLKENTLRTAALYVACGMDPKKCSIFVQSHISAHSELCWLLNCVTPLNWMERMIQFKEKAIKQGDNVSIGLLDYPVLMAADILLYDADLVPVGEDQKQHLELARDIAQQRVNSRFNKESKSILKIPKPLIMKEGGKIMSLIDGNMKMSKSDPNENSRIALLDSPEIIKKKIKRAKTDSFLGLEFDNNQRPEANNLLGIYSMVSNQNREAVQKEFSNIGWGKFKPILTDAIIESLNPIQQKYYSLIKDKTELNNILNKGYIKANTISNQTLKRVRNALGFLDKPIS</sequence>
<proteinExistence type="inferred from homology"/>
<keyword id="KW-0030">Aminoacyl-tRNA synthetase</keyword>
<keyword id="KW-0067">ATP-binding</keyword>
<keyword id="KW-0963">Cytoplasm</keyword>
<keyword id="KW-0436">Ligase</keyword>
<keyword id="KW-0547">Nucleotide-binding</keyword>
<keyword id="KW-0648">Protein biosynthesis</keyword>
<keyword id="KW-1185">Reference proteome</keyword>
<comment type="function">
    <text evidence="1">Catalyzes the attachment of tryptophan to tRNA(Trp).</text>
</comment>
<comment type="catalytic activity">
    <reaction evidence="1">
        <text>tRNA(Trp) + L-tryptophan + ATP = L-tryptophyl-tRNA(Trp) + AMP + diphosphate + H(+)</text>
        <dbReference type="Rhea" id="RHEA:24080"/>
        <dbReference type="Rhea" id="RHEA-COMP:9671"/>
        <dbReference type="Rhea" id="RHEA-COMP:9705"/>
        <dbReference type="ChEBI" id="CHEBI:15378"/>
        <dbReference type="ChEBI" id="CHEBI:30616"/>
        <dbReference type="ChEBI" id="CHEBI:33019"/>
        <dbReference type="ChEBI" id="CHEBI:57912"/>
        <dbReference type="ChEBI" id="CHEBI:78442"/>
        <dbReference type="ChEBI" id="CHEBI:78535"/>
        <dbReference type="ChEBI" id="CHEBI:456215"/>
        <dbReference type="EC" id="6.1.1.2"/>
    </reaction>
</comment>
<comment type="subunit">
    <text evidence="1">Homodimer.</text>
</comment>
<comment type="subcellular location">
    <subcellularLocation>
        <location evidence="1">Cytoplasm</location>
    </subcellularLocation>
</comment>
<comment type="similarity">
    <text evidence="1">Belongs to the class-I aminoacyl-tRNA synthetase family.</text>
</comment>
<evidence type="ECO:0000255" key="1">
    <source>
        <dbReference type="HAMAP-Rule" id="MF_00140"/>
    </source>
</evidence>
<reference key="1">
    <citation type="journal article" date="2003" name="Proc. Natl. Acad. Sci. U.S.A.">
        <title>Genome sequence of the cyanobacterium Prochlorococcus marinus SS120, a nearly minimal oxyphototrophic genome.</title>
        <authorList>
            <person name="Dufresne A."/>
            <person name="Salanoubat M."/>
            <person name="Partensky F."/>
            <person name="Artiguenave F."/>
            <person name="Axmann I.M."/>
            <person name="Barbe V."/>
            <person name="Duprat S."/>
            <person name="Galperin M.Y."/>
            <person name="Koonin E.V."/>
            <person name="Le Gall F."/>
            <person name="Makarova K.S."/>
            <person name="Ostrowski M."/>
            <person name="Oztas S."/>
            <person name="Robert C."/>
            <person name="Rogozin I.B."/>
            <person name="Scanlan D.J."/>
            <person name="Tandeau de Marsac N."/>
            <person name="Weissenbach J."/>
            <person name="Wincker P."/>
            <person name="Wolf Y.I."/>
            <person name="Hess W.R."/>
        </authorList>
    </citation>
    <scope>NUCLEOTIDE SEQUENCE [LARGE SCALE GENOMIC DNA]</scope>
    <source>
        <strain>SARG / CCMP1375 / SS120</strain>
    </source>
</reference>
<accession>Q7VBM9</accession>
<feature type="chain" id="PRO_0000136659" description="Tryptophan--tRNA ligase">
    <location>
        <begin position="1"/>
        <end position="339"/>
    </location>
</feature>
<feature type="short sequence motif" description="'HIGH' region" evidence="1">
    <location>
        <begin position="12"/>
        <end position="20"/>
    </location>
</feature>
<feature type="short sequence motif" description="'KMSKS' region" evidence="1">
    <location>
        <begin position="200"/>
        <end position="204"/>
    </location>
</feature>
<feature type="binding site" evidence="1">
    <location>
        <begin position="11"/>
        <end position="13"/>
    </location>
    <ligand>
        <name>ATP</name>
        <dbReference type="ChEBI" id="CHEBI:30616"/>
    </ligand>
</feature>
<feature type="binding site" evidence="1">
    <location>
        <begin position="19"/>
        <end position="20"/>
    </location>
    <ligand>
        <name>ATP</name>
        <dbReference type="ChEBI" id="CHEBI:30616"/>
    </ligand>
</feature>
<feature type="binding site" evidence="1">
    <location>
        <position position="135"/>
    </location>
    <ligand>
        <name>L-tryptophan</name>
        <dbReference type="ChEBI" id="CHEBI:57912"/>
    </ligand>
</feature>
<feature type="binding site" evidence="1">
    <location>
        <begin position="147"/>
        <end position="149"/>
    </location>
    <ligand>
        <name>ATP</name>
        <dbReference type="ChEBI" id="CHEBI:30616"/>
    </ligand>
</feature>
<feature type="binding site" evidence="1">
    <location>
        <position position="191"/>
    </location>
    <ligand>
        <name>ATP</name>
        <dbReference type="ChEBI" id="CHEBI:30616"/>
    </ligand>
</feature>
<feature type="binding site" evidence="1">
    <location>
        <begin position="200"/>
        <end position="204"/>
    </location>
    <ligand>
        <name>ATP</name>
        <dbReference type="ChEBI" id="CHEBI:30616"/>
    </ligand>
</feature>
<name>SYW_PROMA</name>
<gene>
    <name evidence="1" type="primary">trpS</name>
    <name type="ordered locus">Pro_1063</name>
</gene>